<sequence length="229" mass="26067">MAEHRTKPSELDQGKCDADDNVKIICLGDSAVGKSKLMERFLMDGFQPQQLSTYALTLYKHTATVDGKTILVDFWDTAGQERFQSMHASYYHKAHACIMVFDVQRKVTYKNLSAWYTELREFRPEIPCLVVANKIDADINVTQKSFNFAKKFSLPLYFVSAADGTNVVKLFNDAIRLAVSYKQNSQDFMDEILQELENFNLEQEEEDVPDQEQSGSIETPSEEVASPHS</sequence>
<gene>
    <name type="primary">RABL2A</name>
</gene>
<protein>
    <recommendedName>
        <fullName>Rab-like protein 2A</fullName>
    </recommendedName>
</protein>
<dbReference type="EMBL" id="CR860991">
    <property type="protein sequence ID" value="CAH93093.1"/>
    <property type="molecule type" value="mRNA"/>
</dbReference>
<dbReference type="RefSeq" id="NP_001127629.1">
    <property type="nucleotide sequence ID" value="NM_001134157.1"/>
</dbReference>
<dbReference type="SMR" id="Q5R573"/>
<dbReference type="FunCoup" id="Q5R573">
    <property type="interactions" value="1669"/>
</dbReference>
<dbReference type="STRING" id="9601.ENSPPYP00000013385"/>
<dbReference type="GeneID" id="100174708"/>
<dbReference type="KEGG" id="pon:100174708"/>
<dbReference type="CTD" id="11158"/>
<dbReference type="eggNOG" id="KOG0087">
    <property type="taxonomic scope" value="Eukaryota"/>
</dbReference>
<dbReference type="InParanoid" id="Q5R573"/>
<dbReference type="OrthoDB" id="9516654at2759"/>
<dbReference type="Proteomes" id="UP000001595">
    <property type="component" value="Unplaced"/>
</dbReference>
<dbReference type="GO" id="GO:0005525">
    <property type="term" value="F:GTP binding"/>
    <property type="evidence" value="ECO:0007669"/>
    <property type="project" value="UniProtKB-KW"/>
</dbReference>
<dbReference type="GO" id="GO:0003924">
    <property type="term" value="F:GTPase activity"/>
    <property type="evidence" value="ECO:0007669"/>
    <property type="project" value="InterPro"/>
</dbReference>
<dbReference type="CDD" id="cd04124">
    <property type="entry name" value="RabL2"/>
    <property type="match status" value="1"/>
</dbReference>
<dbReference type="FunFam" id="3.40.50.300:FF:000986">
    <property type="entry name" value="rab-like protein 2B isoform X4"/>
    <property type="match status" value="1"/>
</dbReference>
<dbReference type="Gene3D" id="3.40.50.300">
    <property type="entry name" value="P-loop containing nucleotide triphosphate hydrolases"/>
    <property type="match status" value="1"/>
</dbReference>
<dbReference type="InterPro" id="IPR027417">
    <property type="entry name" value="P-loop_NTPase"/>
</dbReference>
<dbReference type="InterPro" id="IPR041835">
    <property type="entry name" value="RabL2"/>
</dbReference>
<dbReference type="InterPro" id="IPR005225">
    <property type="entry name" value="Small_GTP-bd"/>
</dbReference>
<dbReference type="InterPro" id="IPR001806">
    <property type="entry name" value="Small_GTPase"/>
</dbReference>
<dbReference type="NCBIfam" id="TIGR00231">
    <property type="entry name" value="small_GTP"/>
    <property type="match status" value="1"/>
</dbReference>
<dbReference type="PANTHER" id="PTHR47978">
    <property type="match status" value="1"/>
</dbReference>
<dbReference type="Pfam" id="PF00071">
    <property type="entry name" value="Ras"/>
    <property type="match status" value="1"/>
</dbReference>
<dbReference type="PRINTS" id="PR00449">
    <property type="entry name" value="RASTRNSFRMNG"/>
</dbReference>
<dbReference type="SMART" id="SM00175">
    <property type="entry name" value="RAB"/>
    <property type="match status" value="1"/>
</dbReference>
<dbReference type="SMART" id="SM00176">
    <property type="entry name" value="RAN"/>
    <property type="match status" value="1"/>
</dbReference>
<dbReference type="SMART" id="SM00173">
    <property type="entry name" value="RAS"/>
    <property type="match status" value="1"/>
</dbReference>
<dbReference type="SMART" id="SM00174">
    <property type="entry name" value="RHO"/>
    <property type="match status" value="1"/>
</dbReference>
<dbReference type="SUPFAM" id="SSF52540">
    <property type="entry name" value="P-loop containing nucleoside triphosphate hydrolases"/>
    <property type="match status" value="1"/>
</dbReference>
<dbReference type="PROSITE" id="PS51419">
    <property type="entry name" value="RAB"/>
    <property type="match status" value="1"/>
</dbReference>
<name>RBL2A_PONAB</name>
<feature type="chain" id="PRO_0000280758" description="Rab-like protein 2A">
    <location>
        <begin position="1"/>
        <end position="229"/>
    </location>
</feature>
<feature type="region of interest" description="Disordered" evidence="3">
    <location>
        <begin position="200"/>
        <end position="229"/>
    </location>
</feature>
<feature type="binding site" evidence="1">
    <location>
        <begin position="28"/>
        <end position="35"/>
    </location>
    <ligand>
        <name>GTP</name>
        <dbReference type="ChEBI" id="CHEBI:37565"/>
    </ligand>
</feature>
<feature type="binding site" evidence="1">
    <location>
        <begin position="76"/>
        <end position="80"/>
    </location>
    <ligand>
        <name>GTP</name>
        <dbReference type="ChEBI" id="CHEBI:37565"/>
    </ligand>
</feature>
<feature type="binding site" evidence="1">
    <location>
        <begin position="133"/>
        <end position="136"/>
    </location>
    <ligand>
        <name>GTP</name>
        <dbReference type="ChEBI" id="CHEBI:37565"/>
    </ligand>
</feature>
<keyword id="KW-0342">GTP-binding</keyword>
<keyword id="KW-0547">Nucleotide-binding</keyword>
<keyword id="KW-1185">Reference proteome</keyword>
<reference key="1">
    <citation type="submission" date="2004-11" db="EMBL/GenBank/DDBJ databases">
        <authorList>
            <consortium name="The German cDNA consortium"/>
        </authorList>
    </citation>
    <scope>NUCLEOTIDE SEQUENCE [LARGE SCALE MRNA]</scope>
    <source>
        <tissue>Brain cortex</tissue>
    </source>
</reference>
<comment type="function">
    <text evidence="2">Plays an essential role in male fertility, sperm intra-flagellar transport, and tail assembly. Binds, in a GTP-regulated manner, to a specific set of effector proteins including key proteins involved in cilia development and function and delivers them into the growing sperm tail.</text>
</comment>
<comment type="subunit">
    <text evidence="2">Interacts with IFT27, IFT81, IFT172, ATP6V1E1, HK1, LDHC, MAPRE1 and HSPA2.</text>
</comment>
<comment type="similarity">
    <text evidence="4">Belongs to the small GTPase superfamily. Rab family.</text>
</comment>
<organism>
    <name type="scientific">Pongo abelii</name>
    <name type="common">Sumatran orangutan</name>
    <name type="synonym">Pongo pygmaeus abelii</name>
    <dbReference type="NCBI Taxonomy" id="9601"/>
    <lineage>
        <taxon>Eukaryota</taxon>
        <taxon>Metazoa</taxon>
        <taxon>Chordata</taxon>
        <taxon>Craniata</taxon>
        <taxon>Vertebrata</taxon>
        <taxon>Euteleostomi</taxon>
        <taxon>Mammalia</taxon>
        <taxon>Eutheria</taxon>
        <taxon>Euarchontoglires</taxon>
        <taxon>Primates</taxon>
        <taxon>Haplorrhini</taxon>
        <taxon>Catarrhini</taxon>
        <taxon>Hominidae</taxon>
        <taxon>Pongo</taxon>
    </lineage>
</organism>
<proteinExistence type="evidence at transcript level"/>
<evidence type="ECO:0000250" key="1"/>
<evidence type="ECO:0000250" key="2">
    <source>
        <dbReference type="UniProtKB" id="E9Q9D5"/>
    </source>
</evidence>
<evidence type="ECO:0000256" key="3">
    <source>
        <dbReference type="SAM" id="MobiDB-lite"/>
    </source>
</evidence>
<evidence type="ECO:0000305" key="4"/>
<accession>Q5R573</accession>